<organism>
    <name type="scientific">Oryza sativa subsp. japonica</name>
    <name type="common">Rice</name>
    <dbReference type="NCBI Taxonomy" id="39947"/>
    <lineage>
        <taxon>Eukaryota</taxon>
        <taxon>Viridiplantae</taxon>
        <taxon>Streptophyta</taxon>
        <taxon>Embryophyta</taxon>
        <taxon>Tracheophyta</taxon>
        <taxon>Spermatophyta</taxon>
        <taxon>Magnoliopsida</taxon>
        <taxon>Liliopsida</taxon>
        <taxon>Poales</taxon>
        <taxon>Poaceae</taxon>
        <taxon>BOP clade</taxon>
        <taxon>Oryzoideae</taxon>
        <taxon>Oryzeae</taxon>
        <taxon>Oryzinae</taxon>
        <taxon>Oryza</taxon>
        <taxon>Oryza sativa</taxon>
    </lineage>
</organism>
<proteinExistence type="evidence at transcript level"/>
<dbReference type="EMBL" id="AP008211">
    <property type="protein sequence ID" value="BAF17079.2"/>
    <property type="molecule type" value="Genomic_DNA"/>
</dbReference>
<dbReference type="EMBL" id="AP014961">
    <property type="protein sequence ID" value="BAS93301.1"/>
    <property type="molecule type" value="Genomic_DNA"/>
</dbReference>
<dbReference type="EMBL" id="AK243353">
    <property type="protein sequence ID" value="BAH01556.1"/>
    <property type="molecule type" value="mRNA"/>
</dbReference>
<dbReference type="RefSeq" id="XP_015638475.1">
    <property type="nucleotide sequence ID" value="XM_015782989.1"/>
</dbReference>
<dbReference type="SMR" id="Q0DJ94"/>
<dbReference type="FunCoup" id="Q0DJ94">
    <property type="interactions" value="155"/>
</dbReference>
<dbReference type="STRING" id="39947.Q0DJ94"/>
<dbReference type="PaxDb" id="39947-Q0DJ94"/>
<dbReference type="EnsemblPlants" id="Os05t0312600-01">
    <property type="protein sequence ID" value="Os05t0312600-01"/>
    <property type="gene ID" value="Os05g0312600"/>
</dbReference>
<dbReference type="Gramene" id="Os05t0312600-01">
    <property type="protein sequence ID" value="Os05t0312600-01"/>
    <property type="gene ID" value="Os05g0312600"/>
</dbReference>
<dbReference type="KEGG" id="dosa:Os05g0312600"/>
<dbReference type="eggNOG" id="KOG0027">
    <property type="taxonomic scope" value="Eukaryota"/>
</dbReference>
<dbReference type="HOGENOM" id="CLU_061288_20_3_1"/>
<dbReference type="InParanoid" id="Q0DJ94"/>
<dbReference type="OMA" id="EAGCMAR"/>
<dbReference type="OrthoDB" id="690206at2759"/>
<dbReference type="Proteomes" id="UP000000763">
    <property type="component" value="Chromosome 5"/>
</dbReference>
<dbReference type="Proteomes" id="UP000059680">
    <property type="component" value="Chromosome 5"/>
</dbReference>
<dbReference type="GO" id="GO:0005509">
    <property type="term" value="F:calcium ion binding"/>
    <property type="evidence" value="ECO:0000318"/>
    <property type="project" value="GO_Central"/>
</dbReference>
<dbReference type="CDD" id="cd00051">
    <property type="entry name" value="EFh"/>
    <property type="match status" value="1"/>
</dbReference>
<dbReference type="FunFam" id="1.10.238.10:FF:000089">
    <property type="entry name" value="calmodulin-like protein 3"/>
    <property type="match status" value="1"/>
</dbReference>
<dbReference type="Gene3D" id="1.10.238.10">
    <property type="entry name" value="EF-hand"/>
    <property type="match status" value="1"/>
</dbReference>
<dbReference type="InterPro" id="IPR011992">
    <property type="entry name" value="EF-hand-dom_pair"/>
</dbReference>
<dbReference type="InterPro" id="IPR018247">
    <property type="entry name" value="EF_Hand_1_Ca_BS"/>
</dbReference>
<dbReference type="InterPro" id="IPR002048">
    <property type="entry name" value="EF_hand_dom"/>
</dbReference>
<dbReference type="InterPro" id="IPR039647">
    <property type="entry name" value="EF_hand_pair_protein_CML-like"/>
</dbReference>
<dbReference type="PANTHER" id="PTHR10891">
    <property type="entry name" value="EF-HAND CALCIUM-BINDING DOMAIN CONTAINING PROTEIN"/>
    <property type="match status" value="1"/>
</dbReference>
<dbReference type="Pfam" id="PF13405">
    <property type="entry name" value="EF-hand_6"/>
    <property type="match status" value="1"/>
</dbReference>
<dbReference type="Pfam" id="PF13499">
    <property type="entry name" value="EF-hand_7"/>
    <property type="match status" value="1"/>
</dbReference>
<dbReference type="SMART" id="SM00054">
    <property type="entry name" value="EFh"/>
    <property type="match status" value="3"/>
</dbReference>
<dbReference type="SUPFAM" id="SSF47473">
    <property type="entry name" value="EF-hand"/>
    <property type="match status" value="1"/>
</dbReference>
<dbReference type="PROSITE" id="PS00018">
    <property type="entry name" value="EF_HAND_1"/>
    <property type="match status" value="3"/>
</dbReference>
<dbReference type="PROSITE" id="PS50222">
    <property type="entry name" value="EF_HAND_2"/>
    <property type="match status" value="3"/>
</dbReference>
<sequence length="197" mass="20770">MLRPPPPSSVLTASAAAARPPASVVQPQRQAAHRRRAETLRLRRVFEMFDRDGDGVITPAELSGALCRLGARGEAPPAAAALDAVVAAYIAPGMAGLRFAEFEALHAELAGLGGRQAVAAAEAEEEKEADMREAFGVFDEDGDGYISAAELQAVLSRMGLPEAACMARVRDMIAAADRDSDGRVDYEEFKAMMAAGN</sequence>
<comment type="function">
    <text evidence="1">Potential calcium sensor.</text>
</comment>
<comment type="caution">
    <text evidence="4">Although assigned as a calmodulin family member by PubMed:17263873, it only contains EF-hand domains.</text>
</comment>
<evidence type="ECO:0000250" key="1"/>
<evidence type="ECO:0000255" key="2">
    <source>
        <dbReference type="PROSITE-ProRule" id="PRU00448"/>
    </source>
</evidence>
<evidence type="ECO:0000256" key="3">
    <source>
        <dbReference type="SAM" id="MobiDB-lite"/>
    </source>
</evidence>
<evidence type="ECO:0000305" key="4"/>
<protein>
    <recommendedName>
        <fullName>Probable calcium-binding protein CML21</fullName>
    </recommendedName>
    <alternativeName>
        <fullName>Calmodulin-like protein 21</fullName>
    </alternativeName>
</protein>
<accession>Q0DJ94</accession>
<accession>B7FAA8</accession>
<reference key="1">
    <citation type="journal article" date="2005" name="Nature">
        <title>The map-based sequence of the rice genome.</title>
        <authorList>
            <consortium name="International rice genome sequencing project (IRGSP)"/>
        </authorList>
    </citation>
    <scope>NUCLEOTIDE SEQUENCE [LARGE SCALE GENOMIC DNA]</scope>
    <source>
        <strain>cv. Nipponbare</strain>
    </source>
</reference>
<reference key="2">
    <citation type="journal article" date="2008" name="Nucleic Acids Res.">
        <title>The rice annotation project database (RAP-DB): 2008 update.</title>
        <authorList>
            <consortium name="The rice annotation project (RAP)"/>
        </authorList>
    </citation>
    <scope>GENOME REANNOTATION</scope>
    <source>
        <strain>cv. Nipponbare</strain>
    </source>
</reference>
<reference key="3">
    <citation type="journal article" date="2013" name="Rice">
        <title>Improvement of the Oryza sativa Nipponbare reference genome using next generation sequence and optical map data.</title>
        <authorList>
            <person name="Kawahara Y."/>
            <person name="de la Bastide M."/>
            <person name="Hamilton J.P."/>
            <person name="Kanamori H."/>
            <person name="McCombie W.R."/>
            <person name="Ouyang S."/>
            <person name="Schwartz D.C."/>
            <person name="Tanaka T."/>
            <person name="Wu J."/>
            <person name="Zhou S."/>
            <person name="Childs K.L."/>
            <person name="Davidson R.M."/>
            <person name="Lin H."/>
            <person name="Quesada-Ocampo L."/>
            <person name="Vaillancourt B."/>
            <person name="Sakai H."/>
            <person name="Lee S.S."/>
            <person name="Kim J."/>
            <person name="Numa H."/>
            <person name="Itoh T."/>
            <person name="Buell C.R."/>
            <person name="Matsumoto T."/>
        </authorList>
    </citation>
    <scope>GENOME REANNOTATION</scope>
    <source>
        <strain>cv. Nipponbare</strain>
    </source>
</reference>
<reference key="4">
    <citation type="submission" date="2006-10" db="EMBL/GenBank/DDBJ databases">
        <title>Oryza sativa full length cDNA.</title>
        <authorList>
            <consortium name="The rice full-length cDNA consortium"/>
        </authorList>
    </citation>
    <scope>NUCLEOTIDE SEQUENCE [LARGE SCALE MRNA]</scope>
    <source>
        <strain>cv. Nipponbare</strain>
    </source>
</reference>
<reference key="5">
    <citation type="journal article" date="2007" name="BMC Plant Biol.">
        <title>Genome-wide identification and analyses of the rice calmodulin and related potential calcium sensor proteins.</title>
        <authorList>
            <person name="Boonburapong B."/>
            <person name="Buaboocha T."/>
        </authorList>
    </citation>
    <scope>GENE FAMILY</scope>
    <scope>NOMENCLATURE</scope>
</reference>
<feature type="chain" id="PRO_0000338436" description="Probable calcium-binding protein CML21">
    <location>
        <begin position="1"/>
        <end position="197"/>
    </location>
</feature>
<feature type="domain" description="EF-hand 1" evidence="2">
    <location>
        <begin position="37"/>
        <end position="72"/>
    </location>
</feature>
<feature type="domain" description="EF-hand 2" evidence="2">
    <location>
        <begin position="126"/>
        <end position="161"/>
    </location>
</feature>
<feature type="domain" description="EF-hand 3" evidence="2">
    <location>
        <begin position="164"/>
        <end position="197"/>
    </location>
</feature>
<feature type="region of interest" description="Disordered" evidence="3">
    <location>
        <begin position="1"/>
        <end position="33"/>
    </location>
</feature>
<feature type="compositionally biased region" description="Low complexity" evidence="3">
    <location>
        <begin position="9"/>
        <end position="30"/>
    </location>
</feature>
<feature type="binding site" evidence="2">
    <location>
        <position position="50"/>
    </location>
    <ligand>
        <name>Ca(2+)</name>
        <dbReference type="ChEBI" id="CHEBI:29108"/>
        <label>1</label>
    </ligand>
</feature>
<feature type="binding site" evidence="2">
    <location>
        <position position="52"/>
    </location>
    <ligand>
        <name>Ca(2+)</name>
        <dbReference type="ChEBI" id="CHEBI:29108"/>
        <label>1</label>
    </ligand>
</feature>
<feature type="binding site" evidence="2">
    <location>
        <position position="54"/>
    </location>
    <ligand>
        <name>Ca(2+)</name>
        <dbReference type="ChEBI" id="CHEBI:29108"/>
        <label>1</label>
    </ligand>
</feature>
<feature type="binding site" evidence="2">
    <location>
        <position position="61"/>
    </location>
    <ligand>
        <name>Ca(2+)</name>
        <dbReference type="ChEBI" id="CHEBI:29108"/>
        <label>1</label>
    </ligand>
</feature>
<feature type="binding site" evidence="2">
    <location>
        <position position="139"/>
    </location>
    <ligand>
        <name>Ca(2+)</name>
        <dbReference type="ChEBI" id="CHEBI:29108"/>
        <label>2</label>
    </ligand>
</feature>
<feature type="binding site" evidence="2">
    <location>
        <position position="141"/>
    </location>
    <ligand>
        <name>Ca(2+)</name>
        <dbReference type="ChEBI" id="CHEBI:29108"/>
        <label>2</label>
    </ligand>
</feature>
<feature type="binding site" evidence="2">
    <location>
        <position position="143"/>
    </location>
    <ligand>
        <name>Ca(2+)</name>
        <dbReference type="ChEBI" id="CHEBI:29108"/>
        <label>2</label>
    </ligand>
</feature>
<feature type="binding site" evidence="2">
    <location>
        <position position="145"/>
    </location>
    <ligand>
        <name>Ca(2+)</name>
        <dbReference type="ChEBI" id="CHEBI:29108"/>
        <label>2</label>
    </ligand>
</feature>
<feature type="binding site" evidence="2">
    <location>
        <position position="150"/>
    </location>
    <ligand>
        <name>Ca(2+)</name>
        <dbReference type="ChEBI" id="CHEBI:29108"/>
        <label>2</label>
    </ligand>
</feature>
<feature type="binding site" evidence="2">
    <location>
        <position position="177"/>
    </location>
    <ligand>
        <name>Ca(2+)</name>
        <dbReference type="ChEBI" id="CHEBI:29108"/>
        <label>3</label>
    </ligand>
</feature>
<feature type="binding site" evidence="2">
    <location>
        <position position="179"/>
    </location>
    <ligand>
        <name>Ca(2+)</name>
        <dbReference type="ChEBI" id="CHEBI:29108"/>
        <label>3</label>
    </ligand>
</feature>
<feature type="binding site" evidence="2">
    <location>
        <position position="181"/>
    </location>
    <ligand>
        <name>Ca(2+)</name>
        <dbReference type="ChEBI" id="CHEBI:29108"/>
        <label>3</label>
    </ligand>
</feature>
<feature type="binding site" evidence="2">
    <location>
        <position position="183"/>
    </location>
    <ligand>
        <name>Ca(2+)</name>
        <dbReference type="ChEBI" id="CHEBI:29108"/>
        <label>3</label>
    </ligand>
</feature>
<feature type="binding site" evidence="2">
    <location>
        <position position="188"/>
    </location>
    <ligand>
        <name>Ca(2+)</name>
        <dbReference type="ChEBI" id="CHEBI:29108"/>
        <label>3</label>
    </ligand>
</feature>
<gene>
    <name type="primary">CML21</name>
    <name type="ordered locus">Os05g0312600</name>
    <name type="ordered locus">LOC_Os05g24780</name>
</gene>
<name>CML21_ORYSJ</name>
<keyword id="KW-0106">Calcium</keyword>
<keyword id="KW-0479">Metal-binding</keyword>
<keyword id="KW-1185">Reference proteome</keyword>
<keyword id="KW-0677">Repeat</keyword>